<comment type="function">
    <text evidence="1">Responsible for the aerobic transport of the dicarboxylates fumarate and malate and to a lesser extent succinate, from the periplasm across the inner membrane.</text>
</comment>
<comment type="subcellular location">
    <subcellularLocation>
        <location evidence="1">Cell inner membrane</location>
        <topology evidence="1">Multi-pass membrane protein</topology>
    </subcellularLocation>
</comment>
<comment type="similarity">
    <text evidence="3">Belongs to the dicarboxylate/amino acid:cation symporter (DAACS) (TC 2.A.23) family.</text>
</comment>
<keyword id="KW-0997">Cell inner membrane</keyword>
<keyword id="KW-1003">Cell membrane</keyword>
<keyword id="KW-0472">Membrane</keyword>
<keyword id="KW-1185">Reference proteome</keyword>
<keyword id="KW-0769">Symport</keyword>
<keyword id="KW-0812">Transmembrane</keyword>
<keyword id="KW-1133">Transmembrane helix</keyword>
<keyword id="KW-0813">Transport</keyword>
<sequence>MKTSLFKSLYFQVLTAIAIGILLGHFYPEIGEQMKPLGDGFVKLIKMIIAPVIFCTVVTGIAGMESMKAVGRTGAVALLYFEIVSTIALIIGLIIVNVVQPGAGMNVDPATLDAKAVAVYADQAKDQGIVAFIMDVIPASVIGAFASGNILQVLLFAVLFGFALHRLGSKGQLIFNVIESFSQVIFGIINMIMRLAPIGAFGAMAFTIGKYGVGTLVQLGQLIICFYITCILFVVLVLGSIAKATGFSIFKFIRYIREELLIVLGTSSSESALPRMLDKMEKLGCRKSVVGLVIPTGYSFNLDGTSIYLTMAAVFIAQATNSQMDIVHQITLLIVLLLSSKGAAGVTGSGFIVLAATLSAVGHLPVAGLALILGIDRFMSEARALTNLVGNGVATIVVAKWVKELDHKKLDDVLNNRAPDGKTHELSS</sequence>
<proteinExistence type="inferred from homology"/>
<name>DCTA_ECOL6</name>
<evidence type="ECO:0000250" key="1"/>
<evidence type="ECO:0000255" key="2"/>
<evidence type="ECO:0000305" key="3"/>
<accession>P0A831</accession>
<accession>P37312</accession>
<reference key="1">
    <citation type="journal article" date="2002" name="Proc. Natl. Acad. Sci. U.S.A.">
        <title>Extensive mosaic structure revealed by the complete genome sequence of uropathogenic Escherichia coli.</title>
        <authorList>
            <person name="Welch R.A."/>
            <person name="Burland V."/>
            <person name="Plunkett G. III"/>
            <person name="Redford P."/>
            <person name="Roesch P."/>
            <person name="Rasko D."/>
            <person name="Buckles E.L."/>
            <person name="Liou S.-R."/>
            <person name="Boutin A."/>
            <person name="Hackett J."/>
            <person name="Stroud D."/>
            <person name="Mayhew G.F."/>
            <person name="Rose D.J."/>
            <person name="Zhou S."/>
            <person name="Schwartz D.C."/>
            <person name="Perna N.T."/>
            <person name="Mobley H.L.T."/>
            <person name="Donnenberg M.S."/>
            <person name="Blattner F.R."/>
        </authorList>
    </citation>
    <scope>NUCLEOTIDE SEQUENCE [LARGE SCALE GENOMIC DNA]</scope>
    <source>
        <strain>CFT073 / ATCC 700928 / UPEC</strain>
    </source>
</reference>
<dbReference type="EMBL" id="AE014075">
    <property type="protein sequence ID" value="AAN82776.1"/>
    <property type="molecule type" value="Genomic_DNA"/>
</dbReference>
<dbReference type="RefSeq" id="WP_000858214.1">
    <property type="nucleotide sequence ID" value="NZ_CP051263.1"/>
</dbReference>
<dbReference type="SMR" id="P0A831"/>
<dbReference type="STRING" id="199310.c4340"/>
<dbReference type="GeneID" id="93778248"/>
<dbReference type="KEGG" id="ecc:c4340"/>
<dbReference type="eggNOG" id="COG1301">
    <property type="taxonomic scope" value="Bacteria"/>
</dbReference>
<dbReference type="HOGENOM" id="CLU_019375_7_0_6"/>
<dbReference type="BioCyc" id="ECOL199310:C4340-MONOMER"/>
<dbReference type="Proteomes" id="UP000001410">
    <property type="component" value="Chromosome"/>
</dbReference>
<dbReference type="GO" id="GO:0005886">
    <property type="term" value="C:plasma membrane"/>
    <property type="evidence" value="ECO:0007669"/>
    <property type="project" value="UniProtKB-SubCell"/>
</dbReference>
<dbReference type="GO" id="GO:0015138">
    <property type="term" value="F:fumarate transmembrane transporter activity"/>
    <property type="evidence" value="ECO:0007669"/>
    <property type="project" value="TreeGrafter"/>
</dbReference>
<dbReference type="GO" id="GO:0015366">
    <property type="term" value="F:malate:proton symporter activity"/>
    <property type="evidence" value="ECO:0007669"/>
    <property type="project" value="TreeGrafter"/>
</dbReference>
<dbReference type="GO" id="GO:0015141">
    <property type="term" value="F:succinate transmembrane transporter activity"/>
    <property type="evidence" value="ECO:0007669"/>
    <property type="project" value="TreeGrafter"/>
</dbReference>
<dbReference type="GO" id="GO:0070778">
    <property type="term" value="P:L-aspartate transmembrane transport"/>
    <property type="evidence" value="ECO:0007669"/>
    <property type="project" value="TreeGrafter"/>
</dbReference>
<dbReference type="FunFam" id="1.10.3860.10:FF:000001">
    <property type="entry name" value="C4-dicarboxylate transport protein"/>
    <property type="match status" value="1"/>
</dbReference>
<dbReference type="Gene3D" id="1.10.3860.10">
    <property type="entry name" value="Sodium:dicarboxylate symporter"/>
    <property type="match status" value="1"/>
</dbReference>
<dbReference type="HAMAP" id="MF_01300">
    <property type="entry name" value="C4_dicarb_transport"/>
    <property type="match status" value="1"/>
</dbReference>
<dbReference type="InterPro" id="IPR023954">
    <property type="entry name" value="C4_dicarb_transport"/>
</dbReference>
<dbReference type="InterPro" id="IPR001991">
    <property type="entry name" value="Na-dicarboxylate_symporter"/>
</dbReference>
<dbReference type="InterPro" id="IPR018107">
    <property type="entry name" value="Na-dicarboxylate_symporter_CS"/>
</dbReference>
<dbReference type="InterPro" id="IPR036458">
    <property type="entry name" value="Na:dicarbo_symporter_sf"/>
</dbReference>
<dbReference type="NCBIfam" id="NF002461">
    <property type="entry name" value="PRK01663.1"/>
    <property type="match status" value="1"/>
</dbReference>
<dbReference type="NCBIfam" id="NF009587">
    <property type="entry name" value="PRK13027.1"/>
    <property type="match status" value="1"/>
</dbReference>
<dbReference type="PANTHER" id="PTHR42865:SF1">
    <property type="entry name" value="AEROBIC C4-DICARBOXYLATE TRANSPORT PROTEIN"/>
    <property type="match status" value="1"/>
</dbReference>
<dbReference type="PANTHER" id="PTHR42865">
    <property type="entry name" value="PROTON/GLUTAMATE-ASPARTATE SYMPORTER"/>
    <property type="match status" value="1"/>
</dbReference>
<dbReference type="Pfam" id="PF00375">
    <property type="entry name" value="SDF"/>
    <property type="match status" value="1"/>
</dbReference>
<dbReference type="PRINTS" id="PR00173">
    <property type="entry name" value="EDTRNSPORT"/>
</dbReference>
<dbReference type="SUPFAM" id="SSF118215">
    <property type="entry name" value="Proton glutamate symport protein"/>
    <property type="match status" value="1"/>
</dbReference>
<dbReference type="PROSITE" id="PS00713">
    <property type="entry name" value="NA_DICARBOXYL_SYMP_1"/>
    <property type="match status" value="1"/>
</dbReference>
<dbReference type="PROSITE" id="PS00714">
    <property type="entry name" value="NA_DICARBOXYL_SYMP_2"/>
    <property type="match status" value="1"/>
</dbReference>
<organism>
    <name type="scientific">Escherichia coli O6:H1 (strain CFT073 / ATCC 700928 / UPEC)</name>
    <dbReference type="NCBI Taxonomy" id="199310"/>
    <lineage>
        <taxon>Bacteria</taxon>
        <taxon>Pseudomonadati</taxon>
        <taxon>Pseudomonadota</taxon>
        <taxon>Gammaproteobacteria</taxon>
        <taxon>Enterobacterales</taxon>
        <taxon>Enterobacteriaceae</taxon>
        <taxon>Escherichia</taxon>
    </lineage>
</organism>
<feature type="chain" id="PRO_0000202096" description="Aerobic C4-dicarboxylate transport protein">
    <location>
        <begin position="1"/>
        <end position="428"/>
    </location>
</feature>
<feature type="transmembrane region" description="Helical" evidence="2">
    <location>
        <begin position="5"/>
        <end position="27"/>
    </location>
</feature>
<feature type="transmembrane region" description="Helical" evidence="2">
    <location>
        <begin position="47"/>
        <end position="64"/>
    </location>
</feature>
<feature type="transmembrane region" description="Helical" evidence="2">
    <location>
        <begin position="77"/>
        <end position="99"/>
    </location>
</feature>
<feature type="transmembrane region" description="Helical" evidence="2">
    <location>
        <begin position="141"/>
        <end position="163"/>
    </location>
</feature>
<feature type="transmembrane region" description="Helical" evidence="2">
    <location>
        <begin position="184"/>
        <end position="206"/>
    </location>
</feature>
<feature type="transmembrane region" description="Helical" evidence="2">
    <location>
        <begin position="219"/>
        <end position="241"/>
    </location>
</feature>
<feature type="transmembrane region" description="Helical" evidence="2">
    <location>
        <begin position="326"/>
        <end position="348"/>
    </location>
</feature>
<feature type="transmembrane region" description="Helical" evidence="2">
    <location>
        <begin position="352"/>
        <end position="374"/>
    </location>
</feature>
<gene>
    <name type="primary">dctA</name>
    <name type="ordered locus">c4340</name>
</gene>
<protein>
    <recommendedName>
        <fullName>Aerobic C4-dicarboxylate transport protein</fullName>
    </recommendedName>
</protein>